<gene>
    <name type="primary">POPDC1-AS1</name>
    <name type="synonym">C6orf112</name>
</gene>
<evidence type="ECO:0000305" key="1"/>
<protein>
    <recommendedName>
        <fullName>Putative uncharacterized protein POPDC1-AS1</fullName>
    </recommendedName>
    <alternativeName>
        <fullName>BVES antisense RNA 1</fullName>
    </alternativeName>
    <alternativeName>
        <fullName>BVES antisense gene protein 1</fullName>
    </alternativeName>
</protein>
<name>BVAS1_HUMAN</name>
<dbReference type="EMBL" id="AL137368">
    <property type="status" value="NOT_ANNOTATED_CDS"/>
    <property type="molecule type" value="mRNA"/>
</dbReference>
<dbReference type="EMBL" id="AL356775">
    <property type="status" value="NOT_ANNOTATED_CDS"/>
    <property type="molecule type" value="Genomic_DNA"/>
</dbReference>
<dbReference type="EMBL" id="AL359709">
    <property type="status" value="NOT_ANNOTATED_CDS"/>
    <property type="molecule type" value="Genomic_DNA"/>
</dbReference>
<dbReference type="EMBL" id="CH471051">
    <property type="protein sequence ID" value="EAW48429.1"/>
    <property type="molecule type" value="Genomic_DNA"/>
</dbReference>
<dbReference type="BioMuta" id="HGNC:21223"/>
<dbReference type="AGR" id="HGNC:21223"/>
<dbReference type="GeneCards" id="POPDC1-AS1"/>
<dbReference type="HGNC" id="HGNC:21223">
    <property type="gene designation" value="POPDC1-AS1"/>
</dbReference>
<dbReference type="MalaCards" id="POPDC1-AS1"/>
<dbReference type="neXtProt" id="NX_Q5T3Y7"/>
<dbReference type="InParanoid" id="Q5T3Y7"/>
<dbReference type="PAN-GO" id="Q5T3Y7">
    <property type="GO annotations" value="0 GO annotations based on evolutionary models"/>
</dbReference>
<dbReference type="PhylomeDB" id="Q5T3Y7"/>
<dbReference type="PathwayCommons" id="Q5T3Y7"/>
<dbReference type="ChiTaRS" id="BVES-AS1">
    <property type="organism name" value="human"/>
</dbReference>
<dbReference type="Pharos" id="Q5T3Y7">
    <property type="development level" value="Tdark"/>
</dbReference>
<dbReference type="Proteomes" id="UP000005640">
    <property type="component" value="Unplaced"/>
</dbReference>
<dbReference type="RNAct" id="Q5T3Y7">
    <property type="molecule type" value="protein"/>
</dbReference>
<accession>Q5T3Y7</accession>
<accession>Q5T552</accession>
<feature type="chain" id="PRO_0000395170" description="Putative uncharacterized protein POPDC1-AS1">
    <location>
        <begin position="1"/>
        <end position="98"/>
    </location>
</feature>
<sequence length="98" mass="11178">MLRSTFTVHWTTILGICRPIKPIYKSQACPLSEKRNADNHLVSEDNTFKEPERYISSSCVLTSILYLGEKTFSFRTLISPRGMKLVEILQQPSLTMVA</sequence>
<keyword id="KW-1185">Reference proteome</keyword>
<comment type="caution">
    <text evidence="1">Product of a dubious CDS prediction.</text>
</comment>
<comment type="sequence caution" evidence="1">
    <conflict type="erroneous termination">
        <sequence resource="EMBL" id="AL137368"/>
    </conflict>
    <text>Extended C-terminus.</text>
</comment>
<comment type="sequence caution" evidence="1">
    <conflict type="frameshift">
        <sequence resource="EMBL" id="AL137368"/>
    </conflict>
</comment>
<reference key="1">
    <citation type="journal article" date="2007" name="BMC Genomics">
        <title>The full-ORF clone resource of the German cDNA consortium.</title>
        <authorList>
            <person name="Bechtel S."/>
            <person name="Rosenfelder H."/>
            <person name="Duda A."/>
            <person name="Schmidt C.P."/>
            <person name="Ernst U."/>
            <person name="Wellenreuther R."/>
            <person name="Mehrle A."/>
            <person name="Schuster C."/>
            <person name="Bahr A."/>
            <person name="Bloecker H."/>
            <person name="Heubner D."/>
            <person name="Hoerlein A."/>
            <person name="Michel G."/>
            <person name="Wedler H."/>
            <person name="Koehrer K."/>
            <person name="Ottenwaelder B."/>
            <person name="Poustka A."/>
            <person name="Wiemann S."/>
            <person name="Schupp I."/>
        </authorList>
    </citation>
    <scope>NUCLEOTIDE SEQUENCE [LARGE SCALE MRNA]</scope>
</reference>
<reference key="2">
    <citation type="journal article" date="2003" name="Nature">
        <title>The DNA sequence and analysis of human chromosome 6.</title>
        <authorList>
            <person name="Mungall A.J."/>
            <person name="Palmer S.A."/>
            <person name="Sims S.K."/>
            <person name="Edwards C.A."/>
            <person name="Ashurst J.L."/>
            <person name="Wilming L."/>
            <person name="Jones M.C."/>
            <person name="Horton R."/>
            <person name="Hunt S.E."/>
            <person name="Scott C.E."/>
            <person name="Gilbert J.G.R."/>
            <person name="Clamp M.E."/>
            <person name="Bethel G."/>
            <person name="Milne S."/>
            <person name="Ainscough R."/>
            <person name="Almeida J.P."/>
            <person name="Ambrose K.D."/>
            <person name="Andrews T.D."/>
            <person name="Ashwell R.I.S."/>
            <person name="Babbage A.K."/>
            <person name="Bagguley C.L."/>
            <person name="Bailey J."/>
            <person name="Banerjee R."/>
            <person name="Barker D.J."/>
            <person name="Barlow K.F."/>
            <person name="Bates K."/>
            <person name="Beare D.M."/>
            <person name="Beasley H."/>
            <person name="Beasley O."/>
            <person name="Bird C.P."/>
            <person name="Blakey S.E."/>
            <person name="Bray-Allen S."/>
            <person name="Brook J."/>
            <person name="Brown A.J."/>
            <person name="Brown J.Y."/>
            <person name="Burford D.C."/>
            <person name="Burrill W."/>
            <person name="Burton J."/>
            <person name="Carder C."/>
            <person name="Carter N.P."/>
            <person name="Chapman J.C."/>
            <person name="Clark S.Y."/>
            <person name="Clark G."/>
            <person name="Clee C.M."/>
            <person name="Clegg S."/>
            <person name="Cobley V."/>
            <person name="Collier R.E."/>
            <person name="Collins J.E."/>
            <person name="Colman L.K."/>
            <person name="Corby N.R."/>
            <person name="Coville G.J."/>
            <person name="Culley K.M."/>
            <person name="Dhami P."/>
            <person name="Davies J."/>
            <person name="Dunn M."/>
            <person name="Earthrowl M.E."/>
            <person name="Ellington A.E."/>
            <person name="Evans K.A."/>
            <person name="Faulkner L."/>
            <person name="Francis M.D."/>
            <person name="Frankish A."/>
            <person name="Frankland J."/>
            <person name="French L."/>
            <person name="Garner P."/>
            <person name="Garnett J."/>
            <person name="Ghori M.J."/>
            <person name="Gilby L.M."/>
            <person name="Gillson C.J."/>
            <person name="Glithero R.J."/>
            <person name="Grafham D.V."/>
            <person name="Grant M."/>
            <person name="Gribble S."/>
            <person name="Griffiths C."/>
            <person name="Griffiths M.N.D."/>
            <person name="Hall R."/>
            <person name="Halls K.S."/>
            <person name="Hammond S."/>
            <person name="Harley J.L."/>
            <person name="Hart E.A."/>
            <person name="Heath P.D."/>
            <person name="Heathcott R."/>
            <person name="Holmes S.J."/>
            <person name="Howden P.J."/>
            <person name="Howe K.L."/>
            <person name="Howell G.R."/>
            <person name="Huckle E."/>
            <person name="Humphray S.J."/>
            <person name="Humphries M.D."/>
            <person name="Hunt A.R."/>
            <person name="Johnson C.M."/>
            <person name="Joy A.A."/>
            <person name="Kay M."/>
            <person name="Keenan S.J."/>
            <person name="Kimberley A.M."/>
            <person name="King A."/>
            <person name="Laird G.K."/>
            <person name="Langford C."/>
            <person name="Lawlor S."/>
            <person name="Leongamornlert D.A."/>
            <person name="Leversha M."/>
            <person name="Lloyd C.R."/>
            <person name="Lloyd D.M."/>
            <person name="Loveland J.E."/>
            <person name="Lovell J."/>
            <person name="Martin S."/>
            <person name="Mashreghi-Mohammadi M."/>
            <person name="Maslen G.L."/>
            <person name="Matthews L."/>
            <person name="McCann O.T."/>
            <person name="McLaren S.J."/>
            <person name="McLay K."/>
            <person name="McMurray A."/>
            <person name="Moore M.J.F."/>
            <person name="Mullikin J.C."/>
            <person name="Niblett D."/>
            <person name="Nickerson T."/>
            <person name="Novik K.L."/>
            <person name="Oliver K."/>
            <person name="Overton-Larty E.K."/>
            <person name="Parker A."/>
            <person name="Patel R."/>
            <person name="Pearce A.V."/>
            <person name="Peck A.I."/>
            <person name="Phillimore B.J.C.T."/>
            <person name="Phillips S."/>
            <person name="Plumb R.W."/>
            <person name="Porter K.M."/>
            <person name="Ramsey Y."/>
            <person name="Ranby S.A."/>
            <person name="Rice C.M."/>
            <person name="Ross M.T."/>
            <person name="Searle S.M."/>
            <person name="Sehra H.K."/>
            <person name="Sheridan E."/>
            <person name="Skuce C.D."/>
            <person name="Smith S."/>
            <person name="Smith M."/>
            <person name="Spraggon L."/>
            <person name="Squares S.L."/>
            <person name="Steward C.A."/>
            <person name="Sycamore N."/>
            <person name="Tamlyn-Hall G."/>
            <person name="Tester J."/>
            <person name="Theaker A.J."/>
            <person name="Thomas D.W."/>
            <person name="Thorpe A."/>
            <person name="Tracey A."/>
            <person name="Tromans A."/>
            <person name="Tubby B."/>
            <person name="Wall M."/>
            <person name="Wallis J.M."/>
            <person name="West A.P."/>
            <person name="White S.S."/>
            <person name="Whitehead S.L."/>
            <person name="Whittaker H."/>
            <person name="Wild A."/>
            <person name="Willey D.J."/>
            <person name="Wilmer T.E."/>
            <person name="Wood J.M."/>
            <person name="Wray P.W."/>
            <person name="Wyatt J.C."/>
            <person name="Young L."/>
            <person name="Younger R.M."/>
            <person name="Bentley D.R."/>
            <person name="Coulson A."/>
            <person name="Durbin R.M."/>
            <person name="Hubbard T."/>
            <person name="Sulston J.E."/>
            <person name="Dunham I."/>
            <person name="Rogers J."/>
            <person name="Beck S."/>
        </authorList>
    </citation>
    <scope>NUCLEOTIDE SEQUENCE [LARGE SCALE GENOMIC DNA]</scope>
</reference>
<reference key="3">
    <citation type="submission" date="2005-09" db="EMBL/GenBank/DDBJ databases">
        <authorList>
            <person name="Mural R.J."/>
            <person name="Istrail S."/>
            <person name="Sutton G.G."/>
            <person name="Florea L."/>
            <person name="Halpern A.L."/>
            <person name="Mobarry C.M."/>
            <person name="Lippert R."/>
            <person name="Walenz B."/>
            <person name="Shatkay H."/>
            <person name="Dew I."/>
            <person name="Miller J.R."/>
            <person name="Flanigan M.J."/>
            <person name="Edwards N.J."/>
            <person name="Bolanos R."/>
            <person name="Fasulo D."/>
            <person name="Halldorsson B.V."/>
            <person name="Hannenhalli S."/>
            <person name="Turner R."/>
            <person name="Yooseph S."/>
            <person name="Lu F."/>
            <person name="Nusskern D.R."/>
            <person name="Shue B.C."/>
            <person name="Zheng X.H."/>
            <person name="Zhong F."/>
            <person name="Delcher A.L."/>
            <person name="Huson D.H."/>
            <person name="Kravitz S.A."/>
            <person name="Mouchard L."/>
            <person name="Reinert K."/>
            <person name="Remington K.A."/>
            <person name="Clark A.G."/>
            <person name="Waterman M.S."/>
            <person name="Eichler E.E."/>
            <person name="Adams M.D."/>
            <person name="Hunkapiller M.W."/>
            <person name="Myers E.W."/>
            <person name="Venter J.C."/>
        </authorList>
    </citation>
    <scope>NUCLEOTIDE SEQUENCE [LARGE SCALE GENOMIC DNA]</scope>
</reference>
<organism>
    <name type="scientific">Homo sapiens</name>
    <name type="common">Human</name>
    <dbReference type="NCBI Taxonomy" id="9606"/>
    <lineage>
        <taxon>Eukaryota</taxon>
        <taxon>Metazoa</taxon>
        <taxon>Chordata</taxon>
        <taxon>Craniata</taxon>
        <taxon>Vertebrata</taxon>
        <taxon>Euteleostomi</taxon>
        <taxon>Mammalia</taxon>
        <taxon>Eutheria</taxon>
        <taxon>Euarchontoglires</taxon>
        <taxon>Primates</taxon>
        <taxon>Haplorrhini</taxon>
        <taxon>Catarrhini</taxon>
        <taxon>Hominidae</taxon>
        <taxon>Homo</taxon>
    </lineage>
</organism>
<proteinExistence type="uncertain"/>